<evidence type="ECO:0000255" key="1">
    <source>
        <dbReference type="HAMAP-Rule" id="MF_00023"/>
    </source>
</evidence>
<evidence type="ECO:0000256" key="2">
    <source>
        <dbReference type="SAM" id="MobiDB-lite"/>
    </source>
</evidence>
<comment type="function">
    <text evidence="1">Required for rescue of stalled ribosomes mediated by trans-translation. Binds to transfer-messenger RNA (tmRNA), required for stable association of tmRNA with ribosomes. tmRNA and SmpB together mimic tRNA shape, replacing the anticodon stem-loop with SmpB. tmRNA is encoded by the ssrA gene; the 2 termini fold to resemble tRNA(Ala) and it encodes a 'tag peptide', a short internal open reading frame. During trans-translation Ala-aminoacylated tmRNA acts like a tRNA, entering the A-site of stalled ribosomes, displacing the stalled mRNA. The ribosome then switches to translate the ORF on the tmRNA; the nascent peptide is terminated with the 'tag peptide' encoded by the tmRNA and targeted for degradation. The ribosome is freed to recommence translation, which seems to be the essential function of trans-translation.</text>
</comment>
<comment type="subcellular location">
    <subcellularLocation>
        <location evidence="1">Cytoplasm</location>
    </subcellularLocation>
    <text evidence="1">The tmRNA-SmpB complex associates with stalled 70S ribosomes.</text>
</comment>
<comment type="similarity">
    <text evidence="1">Belongs to the SmpB family.</text>
</comment>
<dbReference type="EMBL" id="CP000413">
    <property type="protein sequence ID" value="ABJ60665.1"/>
    <property type="molecule type" value="Genomic_DNA"/>
</dbReference>
<dbReference type="RefSeq" id="WP_003647017.1">
    <property type="nucleotide sequence ID" value="NZ_WBMG01000002.1"/>
</dbReference>
<dbReference type="SMR" id="Q042F7"/>
<dbReference type="GeneID" id="29638587"/>
<dbReference type="KEGG" id="lga:LGAS_1302"/>
<dbReference type="HOGENOM" id="CLU_108953_0_0_9"/>
<dbReference type="BioCyc" id="LGAS324831:G1G6Y-1297-MONOMER"/>
<dbReference type="Proteomes" id="UP000000664">
    <property type="component" value="Chromosome"/>
</dbReference>
<dbReference type="GO" id="GO:0005829">
    <property type="term" value="C:cytosol"/>
    <property type="evidence" value="ECO:0007669"/>
    <property type="project" value="TreeGrafter"/>
</dbReference>
<dbReference type="GO" id="GO:0003723">
    <property type="term" value="F:RNA binding"/>
    <property type="evidence" value="ECO:0007669"/>
    <property type="project" value="UniProtKB-UniRule"/>
</dbReference>
<dbReference type="GO" id="GO:0070929">
    <property type="term" value="P:trans-translation"/>
    <property type="evidence" value="ECO:0007669"/>
    <property type="project" value="UniProtKB-UniRule"/>
</dbReference>
<dbReference type="CDD" id="cd09294">
    <property type="entry name" value="SmpB"/>
    <property type="match status" value="1"/>
</dbReference>
<dbReference type="Gene3D" id="2.40.280.10">
    <property type="match status" value="1"/>
</dbReference>
<dbReference type="HAMAP" id="MF_00023">
    <property type="entry name" value="SmpB"/>
    <property type="match status" value="1"/>
</dbReference>
<dbReference type="InterPro" id="IPR023620">
    <property type="entry name" value="SmpB"/>
</dbReference>
<dbReference type="InterPro" id="IPR000037">
    <property type="entry name" value="SsrA-bd_prot"/>
</dbReference>
<dbReference type="InterPro" id="IPR020081">
    <property type="entry name" value="SsrA-bd_prot_CS"/>
</dbReference>
<dbReference type="NCBIfam" id="NF003843">
    <property type="entry name" value="PRK05422.1"/>
    <property type="match status" value="1"/>
</dbReference>
<dbReference type="NCBIfam" id="TIGR00086">
    <property type="entry name" value="smpB"/>
    <property type="match status" value="1"/>
</dbReference>
<dbReference type="PANTHER" id="PTHR30308:SF2">
    <property type="entry name" value="SSRA-BINDING PROTEIN"/>
    <property type="match status" value="1"/>
</dbReference>
<dbReference type="PANTHER" id="PTHR30308">
    <property type="entry name" value="TMRNA-BINDING COMPONENT OF TRANS-TRANSLATION TAGGING COMPLEX"/>
    <property type="match status" value="1"/>
</dbReference>
<dbReference type="Pfam" id="PF01668">
    <property type="entry name" value="SmpB"/>
    <property type="match status" value="1"/>
</dbReference>
<dbReference type="SUPFAM" id="SSF74982">
    <property type="entry name" value="Small protein B (SmpB)"/>
    <property type="match status" value="1"/>
</dbReference>
<dbReference type="PROSITE" id="PS01317">
    <property type="entry name" value="SSRP"/>
    <property type="match status" value="1"/>
</dbReference>
<reference key="1">
    <citation type="journal article" date="2006" name="Proc. Natl. Acad. Sci. U.S.A.">
        <title>Comparative genomics of the lactic acid bacteria.</title>
        <authorList>
            <person name="Makarova K.S."/>
            <person name="Slesarev A."/>
            <person name="Wolf Y.I."/>
            <person name="Sorokin A."/>
            <person name="Mirkin B."/>
            <person name="Koonin E.V."/>
            <person name="Pavlov A."/>
            <person name="Pavlova N."/>
            <person name="Karamychev V."/>
            <person name="Polouchine N."/>
            <person name="Shakhova V."/>
            <person name="Grigoriev I."/>
            <person name="Lou Y."/>
            <person name="Rohksar D."/>
            <person name="Lucas S."/>
            <person name="Huang K."/>
            <person name="Goodstein D.M."/>
            <person name="Hawkins T."/>
            <person name="Plengvidhya V."/>
            <person name="Welker D."/>
            <person name="Hughes J."/>
            <person name="Goh Y."/>
            <person name="Benson A."/>
            <person name="Baldwin K."/>
            <person name="Lee J.-H."/>
            <person name="Diaz-Muniz I."/>
            <person name="Dosti B."/>
            <person name="Smeianov V."/>
            <person name="Wechter W."/>
            <person name="Barabote R."/>
            <person name="Lorca G."/>
            <person name="Altermann E."/>
            <person name="Barrangou R."/>
            <person name="Ganesan B."/>
            <person name="Xie Y."/>
            <person name="Rawsthorne H."/>
            <person name="Tamir D."/>
            <person name="Parker C."/>
            <person name="Breidt F."/>
            <person name="Broadbent J.R."/>
            <person name="Hutkins R."/>
            <person name="O'Sullivan D."/>
            <person name="Steele J."/>
            <person name="Unlu G."/>
            <person name="Saier M.H. Jr."/>
            <person name="Klaenhammer T."/>
            <person name="Richardson P."/>
            <person name="Kozyavkin S."/>
            <person name="Weimer B.C."/>
            <person name="Mills D.A."/>
        </authorList>
    </citation>
    <scope>NUCLEOTIDE SEQUENCE [LARGE SCALE GENOMIC DNA]</scope>
    <source>
        <strain>ATCC 33323 / DSM 20243 / BCRC 14619 / CIP 102991 / JCM 1131 / KCTC 3163 / NCIMB 11718 / NCTC 13722 / AM63</strain>
    </source>
</reference>
<accession>Q042F7</accession>
<feature type="chain" id="PRO_1000002072" description="SsrA-binding protein">
    <location>
        <begin position="1"/>
        <end position="151"/>
    </location>
</feature>
<feature type="region of interest" description="Disordered" evidence="2">
    <location>
        <begin position="132"/>
        <end position="151"/>
    </location>
</feature>
<organism>
    <name type="scientific">Lactobacillus gasseri (strain ATCC 33323 / DSM 20243 / BCRC 14619 / CIP 102991 / JCM 1131 / KCTC 3163 / NCIMB 11718 / NCTC 13722 / AM63)</name>
    <dbReference type="NCBI Taxonomy" id="324831"/>
    <lineage>
        <taxon>Bacteria</taxon>
        <taxon>Bacillati</taxon>
        <taxon>Bacillota</taxon>
        <taxon>Bacilli</taxon>
        <taxon>Lactobacillales</taxon>
        <taxon>Lactobacillaceae</taxon>
        <taxon>Lactobacillus</taxon>
    </lineage>
</organism>
<proteinExistence type="inferred from homology"/>
<name>SSRP_LACGA</name>
<protein>
    <recommendedName>
        <fullName evidence="1">SsrA-binding protein</fullName>
    </recommendedName>
    <alternativeName>
        <fullName evidence="1">Small protein B</fullName>
    </alternativeName>
</protein>
<sequence>MKQKADNLIAQNKKANHDYFIKETLEAGIALTGTEIKSIRARRINLRDGYVQIINGSAFLENVHISEYKEGNRYNHDPLRSRRLLLHKREIARLAGIQAQQGMAIIPLKVYLKHGFAKVLIGVGQGKKQYDKRQTIKKRDQDREIHRKYGI</sequence>
<gene>
    <name evidence="1" type="primary">smpB</name>
    <name type="ordered locus">LGAS_1302</name>
</gene>
<keyword id="KW-0963">Cytoplasm</keyword>
<keyword id="KW-0694">RNA-binding</keyword>